<feature type="chain" id="PRO_0000273694" description="Exodeoxyribonuclease 7 large subunit">
    <location>
        <begin position="1"/>
        <end position="458"/>
    </location>
</feature>
<keyword id="KW-0963">Cytoplasm</keyword>
<keyword id="KW-0269">Exonuclease</keyword>
<keyword id="KW-0378">Hydrolase</keyword>
<keyword id="KW-0540">Nuclease</keyword>
<name>EX7L_SODGM</name>
<comment type="function">
    <text evidence="1">Bidirectionally degrades single-stranded DNA into large acid-insoluble oligonucleotides, which are then degraded further into small acid-soluble oligonucleotides.</text>
</comment>
<comment type="catalytic activity">
    <reaction evidence="1">
        <text>Exonucleolytic cleavage in either 5'- to 3'- or 3'- to 5'-direction to yield nucleoside 5'-phosphates.</text>
        <dbReference type="EC" id="3.1.11.6"/>
    </reaction>
</comment>
<comment type="subunit">
    <text evidence="1">Heterooligomer composed of large and small subunits.</text>
</comment>
<comment type="subcellular location">
    <subcellularLocation>
        <location evidence="1">Cytoplasm</location>
    </subcellularLocation>
</comment>
<comment type="similarity">
    <text evidence="1">Belongs to the XseA family.</text>
</comment>
<sequence>MSTPPSSLIFTVSRLNKTVRELLEGEMGQIWLTGEISNFSQPASGHWYFTLKDDRAQVRCAMFRNTNRRTTFAPRNGQQVLVRASLTLYEPRGDYQLIAESMQPAGDGLLQQQFEQLKQQLSDEGLFSQQFKQPLPSPARRVGVITSASGAALHDILQVLQRRDPSLPVVIYPTAVQGQEAPAQILRALEAANRRAECDVLIVGRGGGSLEDLASFNDERVARAIFASRLPVVSAVGHETDVTIADFVADLRAPTPSAAAELVSRNQLELLRQLQSQQQRLEMAMDYFLAQRQQRYSRLQHRLQQQHPQLRLARQHTALMTLRRRLDDGVQGQLRQAQRRHDYVRQRMVQQAPAARINRAQQRLQALRYQLSQGISLRVNRQNNAFVALCSRLEGMSPLKTLARGFSVTTDSHGAVVKQTRQLSAGDRLTTRLRDGWVESQVTEITRQPARRPRRSQD</sequence>
<accession>Q2NS50</accession>
<organism>
    <name type="scientific">Sodalis glossinidius (strain morsitans)</name>
    <dbReference type="NCBI Taxonomy" id="343509"/>
    <lineage>
        <taxon>Bacteria</taxon>
        <taxon>Pseudomonadati</taxon>
        <taxon>Pseudomonadota</taxon>
        <taxon>Gammaproteobacteria</taxon>
        <taxon>Enterobacterales</taxon>
        <taxon>Bruguierivoracaceae</taxon>
        <taxon>Sodalis</taxon>
    </lineage>
</organism>
<proteinExistence type="inferred from homology"/>
<dbReference type="EC" id="3.1.11.6" evidence="1"/>
<dbReference type="EMBL" id="AP008232">
    <property type="protein sequence ID" value="BAE75025.1"/>
    <property type="molecule type" value="Genomic_DNA"/>
</dbReference>
<dbReference type="RefSeq" id="WP_011411574.1">
    <property type="nucleotide sequence ID" value="NC_007712.1"/>
</dbReference>
<dbReference type="SMR" id="Q2NS50"/>
<dbReference type="STRING" id="343509.SG1750"/>
<dbReference type="KEGG" id="sgl:SG1750"/>
<dbReference type="eggNOG" id="COG1570">
    <property type="taxonomic scope" value="Bacteria"/>
</dbReference>
<dbReference type="HOGENOM" id="CLU_023625_3_1_6"/>
<dbReference type="OrthoDB" id="9802795at2"/>
<dbReference type="BioCyc" id="SGLO343509:SGP1_RS15935-MONOMER"/>
<dbReference type="Proteomes" id="UP000001932">
    <property type="component" value="Chromosome"/>
</dbReference>
<dbReference type="GO" id="GO:0005737">
    <property type="term" value="C:cytoplasm"/>
    <property type="evidence" value="ECO:0007669"/>
    <property type="project" value="UniProtKB-SubCell"/>
</dbReference>
<dbReference type="GO" id="GO:0009318">
    <property type="term" value="C:exodeoxyribonuclease VII complex"/>
    <property type="evidence" value="ECO:0007669"/>
    <property type="project" value="InterPro"/>
</dbReference>
<dbReference type="GO" id="GO:0008855">
    <property type="term" value="F:exodeoxyribonuclease VII activity"/>
    <property type="evidence" value="ECO:0007669"/>
    <property type="project" value="UniProtKB-UniRule"/>
</dbReference>
<dbReference type="GO" id="GO:0003676">
    <property type="term" value="F:nucleic acid binding"/>
    <property type="evidence" value="ECO:0007669"/>
    <property type="project" value="InterPro"/>
</dbReference>
<dbReference type="GO" id="GO:0006308">
    <property type="term" value="P:DNA catabolic process"/>
    <property type="evidence" value="ECO:0007669"/>
    <property type="project" value="UniProtKB-UniRule"/>
</dbReference>
<dbReference type="CDD" id="cd04489">
    <property type="entry name" value="ExoVII_LU_OBF"/>
    <property type="match status" value="1"/>
</dbReference>
<dbReference type="HAMAP" id="MF_00378">
    <property type="entry name" value="Exonuc_7_L"/>
    <property type="match status" value="1"/>
</dbReference>
<dbReference type="InterPro" id="IPR003753">
    <property type="entry name" value="Exonuc_VII_L"/>
</dbReference>
<dbReference type="InterPro" id="IPR020579">
    <property type="entry name" value="Exonuc_VII_lsu_C"/>
</dbReference>
<dbReference type="InterPro" id="IPR025824">
    <property type="entry name" value="OB-fold_nuc-bd_dom"/>
</dbReference>
<dbReference type="NCBIfam" id="TIGR00237">
    <property type="entry name" value="xseA"/>
    <property type="match status" value="1"/>
</dbReference>
<dbReference type="PANTHER" id="PTHR30008">
    <property type="entry name" value="EXODEOXYRIBONUCLEASE 7 LARGE SUBUNIT"/>
    <property type="match status" value="1"/>
</dbReference>
<dbReference type="PANTHER" id="PTHR30008:SF0">
    <property type="entry name" value="EXODEOXYRIBONUCLEASE 7 LARGE SUBUNIT"/>
    <property type="match status" value="1"/>
</dbReference>
<dbReference type="Pfam" id="PF02601">
    <property type="entry name" value="Exonuc_VII_L"/>
    <property type="match status" value="1"/>
</dbReference>
<dbReference type="Pfam" id="PF13742">
    <property type="entry name" value="tRNA_anti_2"/>
    <property type="match status" value="1"/>
</dbReference>
<protein>
    <recommendedName>
        <fullName evidence="1">Exodeoxyribonuclease 7 large subunit</fullName>
        <ecNumber evidence="1">3.1.11.6</ecNumber>
    </recommendedName>
    <alternativeName>
        <fullName evidence="1">Exodeoxyribonuclease VII large subunit</fullName>
        <shortName evidence="1">Exonuclease VII large subunit</shortName>
    </alternativeName>
</protein>
<reference key="1">
    <citation type="journal article" date="2006" name="Genome Res.">
        <title>Massive genome erosion and functional adaptations provide insights into the symbiotic lifestyle of Sodalis glossinidius in the tsetse host.</title>
        <authorList>
            <person name="Toh H."/>
            <person name="Weiss B.L."/>
            <person name="Perkin S.A.H."/>
            <person name="Yamashita A."/>
            <person name="Oshima K."/>
            <person name="Hattori M."/>
            <person name="Aksoy S."/>
        </authorList>
    </citation>
    <scope>NUCLEOTIDE SEQUENCE [LARGE SCALE GENOMIC DNA]</scope>
    <source>
        <strain>morsitans</strain>
    </source>
</reference>
<evidence type="ECO:0000255" key="1">
    <source>
        <dbReference type="HAMAP-Rule" id="MF_00378"/>
    </source>
</evidence>
<gene>
    <name evidence="1" type="primary">xseA</name>
    <name type="ordered locus">SG1750</name>
</gene>